<gene>
    <name evidence="1" type="primary">hutH</name>
    <name type="ordered locus">lpp1335</name>
</gene>
<reference key="1">
    <citation type="journal article" date="2004" name="Nat. Genet.">
        <title>Evidence in the Legionella pneumophila genome for exploitation of host cell functions and high genome plasticity.</title>
        <authorList>
            <person name="Cazalet C."/>
            <person name="Rusniok C."/>
            <person name="Brueggemann H."/>
            <person name="Zidane N."/>
            <person name="Magnier A."/>
            <person name="Ma L."/>
            <person name="Tichit M."/>
            <person name="Jarraud S."/>
            <person name="Bouchier C."/>
            <person name="Vandenesch F."/>
            <person name="Kunst F."/>
            <person name="Etienne J."/>
            <person name="Glaser P."/>
            <person name="Buchrieser C."/>
        </authorList>
    </citation>
    <scope>NUCLEOTIDE SEQUENCE [LARGE SCALE GENOMIC DNA]</scope>
    <source>
        <strain>Paris</strain>
    </source>
</reference>
<organism>
    <name type="scientific">Legionella pneumophila (strain Paris)</name>
    <dbReference type="NCBI Taxonomy" id="297246"/>
    <lineage>
        <taxon>Bacteria</taxon>
        <taxon>Pseudomonadati</taxon>
        <taxon>Pseudomonadota</taxon>
        <taxon>Gammaproteobacteria</taxon>
        <taxon>Legionellales</taxon>
        <taxon>Legionellaceae</taxon>
        <taxon>Legionella</taxon>
    </lineage>
</organism>
<comment type="catalytic activity">
    <reaction evidence="1">
        <text>L-histidine = trans-urocanate + NH4(+)</text>
        <dbReference type="Rhea" id="RHEA:21232"/>
        <dbReference type="ChEBI" id="CHEBI:17771"/>
        <dbReference type="ChEBI" id="CHEBI:28938"/>
        <dbReference type="ChEBI" id="CHEBI:57595"/>
        <dbReference type="EC" id="4.3.1.3"/>
    </reaction>
</comment>
<comment type="pathway">
    <text evidence="1">Amino-acid degradation; L-histidine degradation into L-glutamate; N-formimidoyl-L-glutamate from L-histidine: step 1/3.</text>
</comment>
<comment type="subcellular location">
    <subcellularLocation>
        <location evidence="1">Cytoplasm</location>
    </subcellularLocation>
</comment>
<comment type="PTM">
    <text evidence="1">Contains an active site 4-methylidene-imidazol-5-one (MIO), which is formed autocatalytically by cyclization and dehydration of residues Ala-Ser-Gly.</text>
</comment>
<comment type="similarity">
    <text evidence="1">Belongs to the PAL/histidase family.</text>
</comment>
<dbReference type="EC" id="4.3.1.3" evidence="1"/>
<dbReference type="EMBL" id="CR628336">
    <property type="protein sequence ID" value="CAH12486.1"/>
    <property type="molecule type" value="Genomic_DNA"/>
</dbReference>
<dbReference type="RefSeq" id="WP_011213676.1">
    <property type="nucleotide sequence ID" value="NC_006368.1"/>
</dbReference>
<dbReference type="SMR" id="Q5X5I5"/>
<dbReference type="KEGG" id="lpp:lpp1335"/>
<dbReference type="LegioList" id="lpp1335"/>
<dbReference type="HOGENOM" id="CLU_014801_4_0_6"/>
<dbReference type="UniPathway" id="UPA00379">
    <property type="reaction ID" value="UER00549"/>
</dbReference>
<dbReference type="GO" id="GO:0005737">
    <property type="term" value="C:cytoplasm"/>
    <property type="evidence" value="ECO:0007669"/>
    <property type="project" value="UniProtKB-SubCell"/>
</dbReference>
<dbReference type="GO" id="GO:0004397">
    <property type="term" value="F:histidine ammonia-lyase activity"/>
    <property type="evidence" value="ECO:0007669"/>
    <property type="project" value="UniProtKB-UniRule"/>
</dbReference>
<dbReference type="GO" id="GO:0019556">
    <property type="term" value="P:L-histidine catabolic process to glutamate and formamide"/>
    <property type="evidence" value="ECO:0007669"/>
    <property type="project" value="UniProtKB-UniPathway"/>
</dbReference>
<dbReference type="GO" id="GO:0019557">
    <property type="term" value="P:L-histidine catabolic process to glutamate and formate"/>
    <property type="evidence" value="ECO:0007669"/>
    <property type="project" value="UniProtKB-UniPathway"/>
</dbReference>
<dbReference type="CDD" id="cd00332">
    <property type="entry name" value="PAL-HAL"/>
    <property type="match status" value="1"/>
</dbReference>
<dbReference type="FunFam" id="1.10.275.10:FF:000005">
    <property type="entry name" value="Histidine ammonia-lyase"/>
    <property type="match status" value="1"/>
</dbReference>
<dbReference type="FunFam" id="1.20.200.10:FF:000003">
    <property type="entry name" value="Histidine ammonia-lyase"/>
    <property type="match status" value="1"/>
</dbReference>
<dbReference type="Gene3D" id="1.20.200.10">
    <property type="entry name" value="Fumarase/aspartase (Central domain)"/>
    <property type="match status" value="1"/>
</dbReference>
<dbReference type="Gene3D" id="1.10.275.10">
    <property type="entry name" value="Fumarase/aspartase (N-terminal domain)"/>
    <property type="match status" value="1"/>
</dbReference>
<dbReference type="HAMAP" id="MF_00229">
    <property type="entry name" value="His_ammonia_lyase"/>
    <property type="match status" value="1"/>
</dbReference>
<dbReference type="InterPro" id="IPR001106">
    <property type="entry name" value="Aromatic_Lyase"/>
</dbReference>
<dbReference type="InterPro" id="IPR024083">
    <property type="entry name" value="Fumarase/histidase_N"/>
</dbReference>
<dbReference type="InterPro" id="IPR005921">
    <property type="entry name" value="HutH"/>
</dbReference>
<dbReference type="InterPro" id="IPR008948">
    <property type="entry name" value="L-Aspartase-like"/>
</dbReference>
<dbReference type="InterPro" id="IPR022313">
    <property type="entry name" value="Phe/His_NH3-lyase_AS"/>
</dbReference>
<dbReference type="NCBIfam" id="TIGR01225">
    <property type="entry name" value="hutH"/>
    <property type="match status" value="1"/>
</dbReference>
<dbReference type="NCBIfam" id="NF006871">
    <property type="entry name" value="PRK09367.1"/>
    <property type="match status" value="1"/>
</dbReference>
<dbReference type="PANTHER" id="PTHR10362">
    <property type="entry name" value="HISTIDINE AMMONIA-LYASE"/>
    <property type="match status" value="1"/>
</dbReference>
<dbReference type="Pfam" id="PF00221">
    <property type="entry name" value="Lyase_aromatic"/>
    <property type="match status" value="1"/>
</dbReference>
<dbReference type="SUPFAM" id="SSF48557">
    <property type="entry name" value="L-aspartase-like"/>
    <property type="match status" value="1"/>
</dbReference>
<dbReference type="PROSITE" id="PS00488">
    <property type="entry name" value="PAL_HISTIDASE"/>
    <property type="match status" value="1"/>
</dbReference>
<name>HUTH_LEGPA</name>
<evidence type="ECO:0000255" key="1">
    <source>
        <dbReference type="HAMAP-Rule" id="MF_00229"/>
    </source>
</evidence>
<feature type="chain" id="PRO_0000161010" description="Histidine ammonia-lyase">
    <location>
        <begin position="1"/>
        <end position="506"/>
    </location>
</feature>
<feature type="modified residue" description="2,3-didehydroalanine (Ser)" evidence="1">
    <location>
        <position position="145"/>
    </location>
</feature>
<feature type="cross-link" description="5-imidazolinone (Ala-Gly)" evidence="1">
    <location>
        <begin position="144"/>
        <end position="146"/>
    </location>
</feature>
<proteinExistence type="inferred from homology"/>
<keyword id="KW-0963">Cytoplasm</keyword>
<keyword id="KW-0369">Histidine metabolism</keyword>
<keyword id="KW-0456">Lyase</keyword>
<protein>
    <recommendedName>
        <fullName evidence="1">Histidine ammonia-lyase</fullName>
        <shortName evidence="1">Histidase</shortName>
        <ecNumber evidence="1">4.3.1.3</ecNumber>
    </recommendedName>
</protein>
<sequence length="506" mass="54680">MSEHFILQPGQLSLVSIKQILDEELSCVLAEHAFELIRASHQTVKKVIDEKKTVYGINTGFGSLANQTISSDCLKELQRNIVLSHACGTGKLLPDSVVALILLLKINNLSQGYSGVRLELINALIALFNHKVYPCIPSKGSVGASGDLVPLAHLSLPLLGEGEVRHQGQVISAEEGLKLAGLKPLELEAKEGLALLNGLQVSTALALSALFISETLFETAIISGSLSVDAASGSDVPFDDRIHQIRGHQAQISAASMYRNLLAGSQIRESHRHCNRVQDPYSLRCQPQIMGAVLHQMQFVGQTLQVEANAISDNPLVFAEQGDILSGGNFHGEIIAMAADNLALALSEIGGSAERRIALLIDKNFSGLPAFLVRESGLNSGFMIAHVTAASCASDNKALAHPHSVDSLPTSANQEDHVSMATSAARRLHEMIDNTSTILAIELLAACQGLEFHKPLKTSPQLDKIYQSVRSVVKEYDKDRYFAPDIEKIKKKILDKEFSLLTLTNE</sequence>
<accession>Q5X5I5</accession>